<organismHost>
    <name type="scientific">Magallana gigas</name>
    <name type="common">Pacific oyster</name>
    <name type="synonym">Crassostrea gigas</name>
    <dbReference type="NCBI Taxonomy" id="29159"/>
</organismHost>
<organismHost>
    <name type="scientific">Pecten maximus</name>
    <name type="common">King scallop</name>
    <name type="synonym">Pilgrim's clam</name>
    <dbReference type="NCBI Taxonomy" id="6579"/>
</organismHost>
<dbReference type="EMBL" id="AY509253">
    <property type="protein sequence ID" value="AAS00984.1"/>
    <property type="molecule type" value="Genomic_DNA"/>
</dbReference>
<dbReference type="RefSeq" id="YP_024637.1">
    <property type="nucleotide sequence ID" value="NC_005881.2"/>
</dbReference>
<dbReference type="KEGG" id="vg:2948234"/>
<dbReference type="Proteomes" id="UP000007021">
    <property type="component" value="Segment"/>
</dbReference>
<keyword id="KW-1185">Reference proteome</keyword>
<reference key="1">
    <citation type="journal article" date="2005" name="J. Gen. Virol.">
        <title>A novel class of herpesvirus with bivalve hosts.</title>
        <authorList>
            <person name="Davison A.J."/>
            <person name="Trus B.L."/>
            <person name="Cheng N."/>
            <person name="Steven A.C."/>
            <person name="Watson M.S."/>
            <person name="Cunningham C."/>
            <person name="Le Deuff R.M."/>
            <person name="Renault T."/>
        </authorList>
    </citation>
    <scope>NUCLEOTIDE SEQUENCE [LARGE SCALE GENOMIC DNA]</scope>
</reference>
<gene>
    <name type="ORF">ORF98</name>
</gene>
<sequence>MDEYYRTPLYYSSTHLHDLADILPCESCKACEKVYLDYFIAKENEDMINKYFDDITYDVPISKYRNTTMYADALVNDGYLKDLFSLTKPDMARSEEAIEMESLVKELKFAKVPRLGRFMATVMTMLFEQNLEQHRYVNNHTIHKMGFLCLYCYHHMNEYYKVEEEDMANEIIEKMGAVRYEHVDDIMEEFTDCDYIRNHLFADSVLVILPSKMINKIRSNIMADISNGWAEYDGREMANIICESDGIPSFRIKNPRKYVLERLSNTIDEYIYQSRIRGLAKVYWILGGDDMKTTEDPIIHIYFCARNVYISLSPTFFDNPARRDELWNEIARMYNSLYTTQMNFSENLHIGCIKYKGVEYSSYMEQLFGRYSDEIATSEEWGKALLRPLFVCANGEEARQEMEESITKIERLWKNFHFNYEVNIDESLLGKDVGIIRRLFVLYRRRFPNSHRVHVESKCDVNLENPRLSVMMNGDLNGFIVSLLIPCGRKPETAHIIKEIMTVFEDTKILPVFHKKAVYCECHHDGDEEDDDHIFPIFIQPVKNPMRSLFSLTMDVIHTKLSNSKEVMKETFPARVIQQFNNSL</sequence>
<proteinExistence type="predicted"/>
<protein>
    <recommendedName>
        <fullName>Uncharacterized protein ORF98</fullName>
    </recommendedName>
</protein>
<organism>
    <name type="scientific">Ostreid herpesvirus 1 (isolate France)</name>
    <name type="common">OsHV-1</name>
    <name type="synonym">Pacific oyster herpesvirus</name>
    <dbReference type="NCBI Taxonomy" id="654903"/>
    <lineage>
        <taxon>Viruses</taxon>
        <taxon>Duplodnaviria</taxon>
        <taxon>Heunggongvirae</taxon>
        <taxon>Peploviricota</taxon>
        <taxon>Herviviricetes</taxon>
        <taxon>Herpesvirales</taxon>
        <taxon>Malacoherpesviridae</taxon>
        <taxon>Ostreavirus</taxon>
        <taxon>Ostreavirus ostreidmalaco1</taxon>
        <taxon>Ostreid herpesvirus 1</taxon>
    </lineage>
</organism>
<accession>Q6R7D1</accession>
<name>Y098_OSHVF</name>
<feature type="chain" id="PRO_0000385116" description="Uncharacterized protein ORF98">
    <location>
        <begin position="1"/>
        <end position="584"/>
    </location>
</feature>